<dbReference type="PDB" id="1JDL">
    <property type="method" value="X-ray"/>
    <property type="resolution" value="1.70 A"/>
    <property type="chains" value="A=1-121"/>
</dbReference>
<dbReference type="PDBsum" id="1JDL"/>
<dbReference type="SMR" id="P81154"/>
<dbReference type="EvolutionaryTrace" id="P81154"/>
<dbReference type="GO" id="GO:0009055">
    <property type="term" value="F:electron transfer activity"/>
    <property type="evidence" value="ECO:0007669"/>
    <property type="project" value="InterPro"/>
</dbReference>
<dbReference type="GO" id="GO:0020037">
    <property type="term" value="F:heme binding"/>
    <property type="evidence" value="ECO:0007669"/>
    <property type="project" value="InterPro"/>
</dbReference>
<dbReference type="GO" id="GO:0046872">
    <property type="term" value="F:metal ion binding"/>
    <property type="evidence" value="ECO:0007669"/>
    <property type="project" value="UniProtKB-KW"/>
</dbReference>
<dbReference type="GO" id="GO:0015979">
    <property type="term" value="P:photosynthesis"/>
    <property type="evidence" value="ECO:0007669"/>
    <property type="project" value="UniProtKB-KW"/>
</dbReference>
<dbReference type="Gene3D" id="1.10.760.10">
    <property type="entry name" value="Cytochrome c-like domain"/>
    <property type="match status" value="1"/>
</dbReference>
<dbReference type="InterPro" id="IPR009056">
    <property type="entry name" value="Cyt_c-like_dom"/>
</dbReference>
<dbReference type="InterPro" id="IPR036909">
    <property type="entry name" value="Cyt_c-like_dom_sf"/>
</dbReference>
<dbReference type="InterPro" id="IPR002327">
    <property type="entry name" value="Cyt_c_1A/1B"/>
</dbReference>
<dbReference type="PANTHER" id="PTHR11961">
    <property type="entry name" value="CYTOCHROME C"/>
    <property type="match status" value="1"/>
</dbReference>
<dbReference type="Pfam" id="PF00034">
    <property type="entry name" value="Cytochrom_C"/>
    <property type="match status" value="1"/>
</dbReference>
<dbReference type="PRINTS" id="PR00604">
    <property type="entry name" value="CYTCHRMECIAB"/>
</dbReference>
<dbReference type="SUPFAM" id="SSF46626">
    <property type="entry name" value="Cytochrome c"/>
    <property type="match status" value="1"/>
</dbReference>
<dbReference type="PROSITE" id="PS51007">
    <property type="entry name" value="CYTC"/>
    <property type="match status" value="1"/>
</dbReference>
<keyword id="KW-0002">3D-structure</keyword>
<keyword id="KW-0903">Direct protein sequencing</keyword>
<keyword id="KW-0249">Electron transport</keyword>
<keyword id="KW-0349">Heme</keyword>
<keyword id="KW-0408">Iron</keyword>
<keyword id="KW-0479">Metal-binding</keyword>
<keyword id="KW-0602">Photosynthesis</keyword>
<keyword id="KW-0813">Transport</keyword>
<reference key="1">
    <citation type="journal article" date="1998" name="Biochim. Biophys. Acta">
        <title>Purification and primary structure analysis of two cytochrome c2 isozymes from the purple phototrophic bacterium Rhodospirillum centenum.</title>
        <authorList>
            <person name="Samyn B."/>
            <person name="Fitch J."/>
            <person name="Meyer T.E."/>
            <person name="Cusanovich M.A."/>
            <person name="van Beeumen J.J."/>
        </authorList>
    </citation>
    <scope>PROTEIN SEQUENCE</scope>
    <source>
        <strain>ATCC 43720 / DSM 9894 / IAM 14193 / JCM 21060 / NBRC 16667</strain>
    </source>
</reference>
<proteinExistence type="evidence at protein level"/>
<comment type="function">
    <text>Cytochrome c2 is found mainly in purple, non-sulfur, photosynthetic bacteria where it functions as the electron donor to the oxidized bacteriochlorophyll in the photophosphorylation pathway. However, it may also have a role in the respiratory chain and is found in some non-photosynthetic bacteria.</text>
</comment>
<comment type="biophysicochemical properties">
    <redoxPotential>
        <text>E(0) is +293 mV.</text>
    </redoxPotential>
</comment>
<comment type="PTM">
    <text>Binds 1 heme c group covalently per subunit.</text>
</comment>
<comment type="similarity">
    <text evidence="1">Belongs to the cytochrome c family.</text>
</comment>
<protein>
    <recommendedName>
        <fullName>Cytochrome c2 iso-2</fullName>
    </recommendedName>
    <alternativeName>
        <fullName>Cytochrome c552</fullName>
    </alternativeName>
</protein>
<name>CYC22_RHOCE</name>
<organism>
    <name type="scientific">Rhodospirillum centenum</name>
    <name type="common">Rhodocista centenaria</name>
    <dbReference type="NCBI Taxonomy" id="34018"/>
    <lineage>
        <taxon>Bacteria</taxon>
        <taxon>Pseudomonadati</taxon>
        <taxon>Pseudomonadota</taxon>
        <taxon>Alphaproteobacteria</taxon>
        <taxon>Rhodospirillales</taxon>
        <taxon>Rhodospirillaceae</taxon>
        <taxon>Rhodospirillum</taxon>
    </lineage>
</organism>
<evidence type="ECO:0000305" key="1"/>
<evidence type="ECO:0007829" key="2">
    <source>
        <dbReference type="PDB" id="1JDL"/>
    </source>
</evidence>
<feature type="chain" id="PRO_0000108342" description="Cytochrome c2 iso-2">
    <location>
        <begin position="1"/>
        <end position="121"/>
    </location>
</feature>
<feature type="binding site" description="covalent">
    <location>
        <position position="15"/>
    </location>
    <ligand>
        <name>heme c</name>
        <dbReference type="ChEBI" id="CHEBI:61717"/>
    </ligand>
</feature>
<feature type="binding site" description="covalent">
    <location>
        <position position="18"/>
    </location>
    <ligand>
        <name>heme c</name>
        <dbReference type="ChEBI" id="CHEBI:61717"/>
    </ligand>
</feature>
<feature type="binding site" description="axial binding residue">
    <location>
        <position position="19"/>
    </location>
    <ligand>
        <name>heme c</name>
        <dbReference type="ChEBI" id="CHEBI:61717"/>
    </ligand>
    <ligandPart>
        <name>Fe</name>
        <dbReference type="ChEBI" id="CHEBI:18248"/>
    </ligandPart>
</feature>
<feature type="binding site" description="axial binding residue">
    <location>
        <position position="98"/>
    </location>
    <ligand>
        <name>heme c</name>
        <dbReference type="ChEBI" id="CHEBI:61717"/>
    </ligand>
    <ligandPart>
        <name>Fe</name>
        <dbReference type="ChEBI" id="CHEBI:18248"/>
    </ligandPart>
</feature>
<feature type="helix" evidence="2">
    <location>
        <begin position="5"/>
        <end position="11"/>
    </location>
</feature>
<feature type="helix" evidence="2">
    <location>
        <begin position="12"/>
        <end position="14"/>
    </location>
</feature>
<feature type="turn" evidence="2">
    <location>
        <begin position="15"/>
        <end position="18"/>
    </location>
</feature>
<feature type="strand" evidence="2">
    <location>
        <begin position="28"/>
        <end position="30"/>
    </location>
</feature>
<feature type="helix" evidence="2">
    <location>
        <begin position="51"/>
        <end position="58"/>
    </location>
</feature>
<feature type="helix" evidence="2">
    <location>
        <begin position="65"/>
        <end position="71"/>
    </location>
</feature>
<feature type="helix" evidence="2">
    <location>
        <begin position="75"/>
        <end position="85"/>
    </location>
</feature>
<feature type="helix" evidence="2">
    <location>
        <begin position="89"/>
        <end position="92"/>
    </location>
</feature>
<feature type="helix" evidence="2">
    <location>
        <begin position="105"/>
        <end position="115"/>
    </location>
</feature>
<feature type="helix" evidence="2">
    <location>
        <begin position="116"/>
        <end position="118"/>
    </location>
</feature>
<accession>P81154</accession>
<sequence length="121" mass="13035">EDGDPAKGEAVFKKCMACHRVGPDAKNLVGPALTGVIDRQAGTAPGFNYSAINHAAGEAGLHWTPENIIAYLPDPNAFLRKFLADAGHAEQAKGSTKMVFKLPDEQERKDVVAYLKQFSPQ</sequence>